<proteinExistence type="evidence at protein level"/>
<dbReference type="EC" id="3.6.5.3" evidence="2"/>
<dbReference type="EMBL" id="AE016828">
    <property type="protein sequence ID" value="ACI15245.1"/>
    <property type="molecule type" value="Genomic_DNA"/>
</dbReference>
<dbReference type="EMBL" id="AE016828">
    <property type="protein sequence ID" value="AAO89794.1"/>
    <property type="molecule type" value="Genomic_DNA"/>
</dbReference>
<dbReference type="EMBL" id="AF136604">
    <property type="protein sequence ID" value="AAD32649.1"/>
    <property type="molecule type" value="Genomic_DNA"/>
</dbReference>
<dbReference type="RefSeq" id="NP_819280.1">
    <property type="nucleotide sequence ID" value="NC_002971.3"/>
</dbReference>
<dbReference type="RefSeq" id="YP_002332954.1">
    <property type="nucleotide sequence ID" value="NC_002971.3"/>
</dbReference>
<dbReference type="SMR" id="Q83ES6"/>
<dbReference type="STRING" id="227377.CBU_0221b"/>
<dbReference type="EnsemblBacteria" id="AAO89794">
    <property type="protein sequence ID" value="AAO89794"/>
    <property type="gene ID" value="CBU_0236"/>
</dbReference>
<dbReference type="EnsemblBacteria" id="ACI15245">
    <property type="protein sequence ID" value="ACI15245"/>
    <property type="gene ID" value="CBU_0221b"/>
</dbReference>
<dbReference type="GeneID" id="1208103"/>
<dbReference type="GeneID" id="1208117"/>
<dbReference type="KEGG" id="cbu:CBU_0221b"/>
<dbReference type="KEGG" id="cbu:CBU_0236"/>
<dbReference type="PATRIC" id="fig|227377.7.peg.217"/>
<dbReference type="eggNOG" id="COG0050">
    <property type="taxonomic scope" value="Bacteria"/>
</dbReference>
<dbReference type="HOGENOM" id="CLU_007265_0_1_6"/>
<dbReference type="OrthoDB" id="9803139at2"/>
<dbReference type="Proteomes" id="UP000002671">
    <property type="component" value="Chromosome"/>
</dbReference>
<dbReference type="GO" id="GO:0005737">
    <property type="term" value="C:cytoplasm"/>
    <property type="evidence" value="ECO:0007669"/>
    <property type="project" value="UniProtKB-SubCell"/>
</dbReference>
<dbReference type="GO" id="GO:0005525">
    <property type="term" value="F:GTP binding"/>
    <property type="evidence" value="ECO:0007669"/>
    <property type="project" value="UniProtKB-UniRule"/>
</dbReference>
<dbReference type="GO" id="GO:0003924">
    <property type="term" value="F:GTPase activity"/>
    <property type="evidence" value="ECO:0007669"/>
    <property type="project" value="InterPro"/>
</dbReference>
<dbReference type="GO" id="GO:0097216">
    <property type="term" value="F:guanosine tetraphosphate binding"/>
    <property type="evidence" value="ECO:0007669"/>
    <property type="project" value="UniProtKB-ARBA"/>
</dbReference>
<dbReference type="GO" id="GO:0003746">
    <property type="term" value="F:translation elongation factor activity"/>
    <property type="evidence" value="ECO:0000318"/>
    <property type="project" value="GO_Central"/>
</dbReference>
<dbReference type="GO" id="GO:0006414">
    <property type="term" value="P:translational elongation"/>
    <property type="evidence" value="ECO:0000318"/>
    <property type="project" value="GO_Central"/>
</dbReference>
<dbReference type="CDD" id="cd01884">
    <property type="entry name" value="EF_Tu"/>
    <property type="match status" value="1"/>
</dbReference>
<dbReference type="CDD" id="cd03697">
    <property type="entry name" value="EFTU_II"/>
    <property type="match status" value="1"/>
</dbReference>
<dbReference type="CDD" id="cd03707">
    <property type="entry name" value="EFTU_III"/>
    <property type="match status" value="1"/>
</dbReference>
<dbReference type="FunFam" id="2.40.30.10:FF:000001">
    <property type="entry name" value="Elongation factor Tu"/>
    <property type="match status" value="1"/>
</dbReference>
<dbReference type="FunFam" id="3.40.50.300:FF:000003">
    <property type="entry name" value="Elongation factor Tu"/>
    <property type="match status" value="1"/>
</dbReference>
<dbReference type="Gene3D" id="3.40.50.300">
    <property type="entry name" value="P-loop containing nucleotide triphosphate hydrolases"/>
    <property type="match status" value="1"/>
</dbReference>
<dbReference type="Gene3D" id="2.40.30.10">
    <property type="entry name" value="Translation factors"/>
    <property type="match status" value="2"/>
</dbReference>
<dbReference type="HAMAP" id="MF_00118_B">
    <property type="entry name" value="EF_Tu_B"/>
    <property type="match status" value="1"/>
</dbReference>
<dbReference type="InterPro" id="IPR041709">
    <property type="entry name" value="EF-Tu_GTP-bd"/>
</dbReference>
<dbReference type="InterPro" id="IPR050055">
    <property type="entry name" value="EF-Tu_GTPase"/>
</dbReference>
<dbReference type="InterPro" id="IPR004161">
    <property type="entry name" value="EFTu-like_2"/>
</dbReference>
<dbReference type="InterPro" id="IPR033720">
    <property type="entry name" value="EFTU_2"/>
</dbReference>
<dbReference type="InterPro" id="IPR031157">
    <property type="entry name" value="G_TR_CS"/>
</dbReference>
<dbReference type="InterPro" id="IPR027417">
    <property type="entry name" value="P-loop_NTPase"/>
</dbReference>
<dbReference type="InterPro" id="IPR005225">
    <property type="entry name" value="Small_GTP-bd"/>
</dbReference>
<dbReference type="InterPro" id="IPR000795">
    <property type="entry name" value="T_Tr_GTP-bd_dom"/>
</dbReference>
<dbReference type="InterPro" id="IPR009000">
    <property type="entry name" value="Transl_B-barrel_sf"/>
</dbReference>
<dbReference type="InterPro" id="IPR009001">
    <property type="entry name" value="Transl_elong_EF1A/Init_IF2_C"/>
</dbReference>
<dbReference type="InterPro" id="IPR004541">
    <property type="entry name" value="Transl_elong_EFTu/EF1A_bac/org"/>
</dbReference>
<dbReference type="InterPro" id="IPR004160">
    <property type="entry name" value="Transl_elong_EFTu/EF1A_C"/>
</dbReference>
<dbReference type="NCBIfam" id="TIGR00485">
    <property type="entry name" value="EF-Tu"/>
    <property type="match status" value="1"/>
</dbReference>
<dbReference type="NCBIfam" id="NF000766">
    <property type="entry name" value="PRK00049.1"/>
    <property type="match status" value="1"/>
</dbReference>
<dbReference type="NCBIfam" id="NF009372">
    <property type="entry name" value="PRK12735.1"/>
    <property type="match status" value="1"/>
</dbReference>
<dbReference type="NCBIfam" id="NF009373">
    <property type="entry name" value="PRK12736.1"/>
    <property type="match status" value="1"/>
</dbReference>
<dbReference type="NCBIfam" id="TIGR00231">
    <property type="entry name" value="small_GTP"/>
    <property type="match status" value="1"/>
</dbReference>
<dbReference type="PANTHER" id="PTHR43721:SF22">
    <property type="entry name" value="ELONGATION FACTOR TU, MITOCHONDRIAL"/>
    <property type="match status" value="1"/>
</dbReference>
<dbReference type="PANTHER" id="PTHR43721">
    <property type="entry name" value="ELONGATION FACTOR TU-RELATED"/>
    <property type="match status" value="1"/>
</dbReference>
<dbReference type="Pfam" id="PF00009">
    <property type="entry name" value="GTP_EFTU"/>
    <property type="match status" value="1"/>
</dbReference>
<dbReference type="Pfam" id="PF03144">
    <property type="entry name" value="GTP_EFTU_D2"/>
    <property type="match status" value="1"/>
</dbReference>
<dbReference type="Pfam" id="PF03143">
    <property type="entry name" value="GTP_EFTU_D3"/>
    <property type="match status" value="1"/>
</dbReference>
<dbReference type="PRINTS" id="PR00315">
    <property type="entry name" value="ELONGATNFCT"/>
</dbReference>
<dbReference type="SUPFAM" id="SSF50465">
    <property type="entry name" value="EF-Tu/eEF-1alpha/eIF2-gamma C-terminal domain"/>
    <property type="match status" value="1"/>
</dbReference>
<dbReference type="SUPFAM" id="SSF52540">
    <property type="entry name" value="P-loop containing nucleoside triphosphate hydrolases"/>
    <property type="match status" value="1"/>
</dbReference>
<dbReference type="SUPFAM" id="SSF50447">
    <property type="entry name" value="Translation proteins"/>
    <property type="match status" value="1"/>
</dbReference>
<dbReference type="PROSITE" id="PS00301">
    <property type="entry name" value="G_TR_1"/>
    <property type="match status" value="1"/>
</dbReference>
<dbReference type="PROSITE" id="PS51722">
    <property type="entry name" value="G_TR_2"/>
    <property type="match status" value="1"/>
</dbReference>
<comment type="function">
    <text evidence="2">GTP hydrolase that promotes the GTP-dependent binding of aminoacyl-tRNA to the A-site of ribosomes during protein biosynthesis.</text>
</comment>
<comment type="catalytic activity">
    <reaction evidence="2">
        <text>GTP + H2O = GDP + phosphate + H(+)</text>
        <dbReference type="Rhea" id="RHEA:19669"/>
        <dbReference type="ChEBI" id="CHEBI:15377"/>
        <dbReference type="ChEBI" id="CHEBI:15378"/>
        <dbReference type="ChEBI" id="CHEBI:37565"/>
        <dbReference type="ChEBI" id="CHEBI:43474"/>
        <dbReference type="ChEBI" id="CHEBI:58189"/>
        <dbReference type="EC" id="3.6.5.3"/>
    </reaction>
    <physiologicalReaction direction="left-to-right" evidence="2">
        <dbReference type="Rhea" id="RHEA:19670"/>
    </physiologicalReaction>
</comment>
<comment type="subunit">
    <text evidence="2">Monomer.</text>
</comment>
<comment type="subcellular location">
    <subcellularLocation>
        <location>Cytoplasm</location>
    </subcellularLocation>
</comment>
<comment type="developmental stage">
    <text evidence="3 4">Found in the large cell variant (LCV) stage, undetectable in the small cell variant (SCV) stage; at protein level. LCVs are more metabolically active than SCVs.</text>
</comment>
<comment type="similarity">
    <text evidence="2">Belongs to the TRAFAC class translation factor GTPase superfamily. Classic translation factor GTPase family. EF-Tu/EF-1A subfamily.</text>
</comment>
<accession>Q83ES6</accession>
<accession>B5QS64</accession>
<accession>Q83ET7</accession>
<accession>Q9X6G1</accession>
<gene>
    <name evidence="2" type="primary">tufA</name>
    <name type="synonym">tuf-1</name>
    <name type="ordered locus">CBU_0221.2</name>
    <name type="ORF">CBU_0221b</name>
</gene>
<gene>
    <name evidence="2" type="primary">tufB</name>
    <name type="synonym">tuf-2</name>
    <name type="ordered locus">CBU_0236</name>
</gene>
<organism>
    <name type="scientific">Coxiella burnetii (strain RSA 493 / Nine Mile phase I)</name>
    <dbReference type="NCBI Taxonomy" id="227377"/>
    <lineage>
        <taxon>Bacteria</taxon>
        <taxon>Pseudomonadati</taxon>
        <taxon>Pseudomonadota</taxon>
        <taxon>Gammaproteobacteria</taxon>
        <taxon>Legionellales</taxon>
        <taxon>Coxiellaceae</taxon>
        <taxon>Coxiella</taxon>
    </lineage>
</organism>
<feature type="chain" id="PRO_1000015645" description="Elongation factor Tu">
    <location>
        <begin position="1"/>
        <end position="397"/>
    </location>
</feature>
<feature type="domain" description="tr-type G">
    <location>
        <begin position="10"/>
        <end position="206"/>
    </location>
</feature>
<feature type="region of interest" description="G1" evidence="1">
    <location>
        <begin position="19"/>
        <end position="26"/>
    </location>
</feature>
<feature type="region of interest" description="G2" evidence="1">
    <location>
        <begin position="60"/>
        <end position="64"/>
    </location>
</feature>
<feature type="region of interest" description="G3" evidence="1">
    <location>
        <begin position="81"/>
        <end position="84"/>
    </location>
</feature>
<feature type="region of interest" description="G4" evidence="1">
    <location>
        <begin position="136"/>
        <end position="139"/>
    </location>
</feature>
<feature type="region of interest" description="G5" evidence="1">
    <location>
        <begin position="174"/>
        <end position="176"/>
    </location>
</feature>
<feature type="binding site" evidence="2">
    <location>
        <begin position="19"/>
        <end position="26"/>
    </location>
    <ligand>
        <name>GTP</name>
        <dbReference type="ChEBI" id="CHEBI:37565"/>
    </ligand>
</feature>
<feature type="binding site" evidence="2">
    <location>
        <position position="26"/>
    </location>
    <ligand>
        <name>Mg(2+)</name>
        <dbReference type="ChEBI" id="CHEBI:18420"/>
    </ligand>
</feature>
<feature type="binding site" evidence="2">
    <location>
        <begin position="81"/>
        <end position="85"/>
    </location>
    <ligand>
        <name>GTP</name>
        <dbReference type="ChEBI" id="CHEBI:37565"/>
    </ligand>
</feature>
<feature type="binding site" evidence="2">
    <location>
        <begin position="136"/>
        <end position="139"/>
    </location>
    <ligand>
        <name>GTP</name>
        <dbReference type="ChEBI" id="CHEBI:37565"/>
    </ligand>
</feature>
<evidence type="ECO:0000250" key="1"/>
<evidence type="ECO:0000255" key="2">
    <source>
        <dbReference type="HAMAP-Rule" id="MF_00118"/>
    </source>
</evidence>
<evidence type="ECO:0000269" key="3">
    <source>
    </source>
</evidence>
<evidence type="ECO:0000269" key="4">
    <source>
    </source>
</evidence>
<reference key="1">
    <citation type="journal article" date="2003" name="Proc. Natl. Acad. Sci. U.S.A.">
        <title>Complete genome sequence of the Q-fever pathogen, Coxiella burnetii.</title>
        <authorList>
            <person name="Seshadri R."/>
            <person name="Paulsen I.T."/>
            <person name="Eisen J.A."/>
            <person name="Read T.D."/>
            <person name="Nelson K.E."/>
            <person name="Nelson W.C."/>
            <person name="Ward N.L."/>
            <person name="Tettelin H."/>
            <person name="Davidsen T.M."/>
            <person name="Beanan M.J."/>
            <person name="DeBoy R.T."/>
            <person name="Daugherty S.C."/>
            <person name="Brinkac L.M."/>
            <person name="Madupu R."/>
            <person name="Dodson R.J."/>
            <person name="Khouri H.M."/>
            <person name="Lee K.H."/>
            <person name="Carty H.A."/>
            <person name="Scanlan D."/>
            <person name="Heinzen R.A."/>
            <person name="Thompson H.A."/>
            <person name="Samuel J.E."/>
            <person name="Fraser C.M."/>
            <person name="Heidelberg J.F."/>
        </authorList>
    </citation>
    <scope>NUCLEOTIDE SEQUENCE [LARGE SCALE GENOMIC DNA]</scope>
    <source>
        <strain>RSA 493 / Nine Mile phase I</strain>
    </source>
</reference>
<reference key="2">
    <citation type="journal article" date="1999" name="Infect. Immun.">
        <title>Differential expression of translational elements by life cycle variants of Coxiella burnetii.</title>
        <authorList>
            <person name="Seshadri R."/>
            <person name="Hendrix L.R."/>
            <person name="Samuel J.E."/>
        </authorList>
    </citation>
    <scope>NUCLEOTIDE SEQUENCE [GENOMIC DNA] OF 1-358</scope>
    <scope>DEVELOPMENTAL STAGE</scope>
    <source>
        <strain>RSA 493 / Nine Mile phase I</strain>
    </source>
</reference>
<reference key="3">
    <citation type="journal article" date="2007" name="Infect. Immun.">
        <title>Proteome and antigen profiling of Coxiella burnetii developmental forms.</title>
        <authorList>
            <person name="Coleman S.A."/>
            <person name="Fischer E.R."/>
            <person name="Cockrell D.C."/>
            <person name="Voth D.E."/>
            <person name="Howe D."/>
            <person name="Mead D.J."/>
            <person name="Samuel J.E."/>
            <person name="Heinzen R.A."/>
        </authorList>
    </citation>
    <scope>IDENTIFICATION BY MASS SPECTROMETRY</scope>
    <scope>DEVELOPMENTAL STAGE</scope>
    <source>
        <strain>Nine Mile Crazy / RSA 514</strain>
    </source>
</reference>
<keyword id="KW-0963">Cytoplasm</keyword>
<keyword id="KW-0251">Elongation factor</keyword>
<keyword id="KW-0342">GTP-binding</keyword>
<keyword id="KW-0378">Hydrolase</keyword>
<keyword id="KW-0460">Magnesium</keyword>
<keyword id="KW-0479">Metal-binding</keyword>
<keyword id="KW-0547">Nucleotide-binding</keyword>
<keyword id="KW-0648">Protein biosynthesis</keyword>
<keyword id="KW-1185">Reference proteome</keyword>
<sequence>MSKEKFVREKPHVNVGTIGHVDHGKTTLTAALTKVLSEKYGGEKKAFDQIDNAPEERARGITIATSHVEYQSDKRHYAHVDCPGHADYVKNMITGAAQMDGAILVVSAADGPMPQTREHIVLAKQVGVPNIVVYLNKADMVDDKELLELVEMEVRDLLNSYDFPGDETPIIVGSALKALEGDKSEVGEPSIIKLVETMDTYFPQPERAIDKPFLMPIEDVFSISGRGTVVTGRVERGIIKVGDEIEIVGIKDTTKTTCTGVEMFRKLLDEGQAGDNVGILLRGTKREEVERGQVLAKPGSITPHKKFEAEIYVLSKEEGGRHTPFLQGYRPQFYFRTTDVTGQLLSLPEGIEMVMPGDNVKVTVELIAPVAMDEGLRFAVREGGRTVGAGVVTKIIE</sequence>
<name>EFTU_COXBU</name>
<protein>
    <recommendedName>
        <fullName evidence="2">Elongation factor Tu</fullName>
        <shortName evidence="2">EF-Tu</shortName>
        <ecNumber evidence="2">3.6.5.3</ecNumber>
    </recommendedName>
</protein>